<feature type="chain" id="PRO_1000131499" description="Small, acid-soluble spore protein O">
    <location>
        <begin position="1"/>
        <end position="49"/>
    </location>
</feature>
<feature type="region of interest" description="Disordered" evidence="2">
    <location>
        <begin position="1"/>
        <end position="49"/>
    </location>
</feature>
<feature type="compositionally biased region" description="Polar residues" evidence="2">
    <location>
        <begin position="8"/>
        <end position="20"/>
    </location>
</feature>
<protein>
    <recommendedName>
        <fullName evidence="1">Small, acid-soluble spore protein O</fullName>
        <shortName evidence="1">SASP O</shortName>
    </recommendedName>
</protein>
<gene>
    <name evidence="1" type="primary">sspO</name>
    <name type="ordered locus">BCB4264_A3725</name>
</gene>
<comment type="subcellular location">
    <subcellularLocation>
        <location evidence="1">Spore core</location>
    </subcellularLocation>
</comment>
<comment type="induction">
    <text evidence="1">Expressed only in the forespore compartment of sporulating cells.</text>
</comment>
<comment type="similarity">
    <text evidence="1">Belongs to the SspO family.</text>
</comment>
<organism>
    <name type="scientific">Bacillus cereus (strain B4264)</name>
    <dbReference type="NCBI Taxonomy" id="405532"/>
    <lineage>
        <taxon>Bacteria</taxon>
        <taxon>Bacillati</taxon>
        <taxon>Bacillota</taxon>
        <taxon>Bacilli</taxon>
        <taxon>Bacillales</taxon>
        <taxon>Bacillaceae</taxon>
        <taxon>Bacillus</taxon>
        <taxon>Bacillus cereus group</taxon>
    </lineage>
</organism>
<reference key="1">
    <citation type="submission" date="2008-10" db="EMBL/GenBank/DDBJ databases">
        <title>Genome sequence of Bacillus cereus B4264.</title>
        <authorList>
            <person name="Dodson R.J."/>
            <person name="Durkin A.S."/>
            <person name="Rosovitz M.J."/>
            <person name="Rasko D.A."/>
            <person name="Hoffmaster A."/>
            <person name="Ravel J."/>
            <person name="Sutton G."/>
        </authorList>
    </citation>
    <scope>NUCLEOTIDE SEQUENCE [LARGE SCALE GENOMIC DNA]</scope>
    <source>
        <strain>B4264</strain>
    </source>
</reference>
<sequence>MGKRKANHTISGMNAASAQGQGTGYNEEFANEPLTPAERQNNKKRKKNQ</sequence>
<dbReference type="EMBL" id="CP001176">
    <property type="protein sequence ID" value="ACK59104.1"/>
    <property type="molecule type" value="Genomic_DNA"/>
</dbReference>
<dbReference type="RefSeq" id="WP_000518057.1">
    <property type="nucleotide sequence ID" value="NZ_VEHB01000002.1"/>
</dbReference>
<dbReference type="SMR" id="B7HC95"/>
<dbReference type="GeneID" id="72450284"/>
<dbReference type="KEGG" id="bcb:BCB4264_A3725"/>
<dbReference type="HOGENOM" id="CLU_206342_0_0_9"/>
<dbReference type="Proteomes" id="UP000007096">
    <property type="component" value="Chromosome"/>
</dbReference>
<dbReference type="GO" id="GO:0042601">
    <property type="term" value="C:endospore-forming forespore"/>
    <property type="evidence" value="ECO:0007669"/>
    <property type="project" value="InterPro"/>
</dbReference>
<dbReference type="GO" id="GO:0030436">
    <property type="term" value="P:asexual sporulation"/>
    <property type="evidence" value="ECO:0007669"/>
    <property type="project" value="UniProtKB-UniRule"/>
</dbReference>
<dbReference type="GO" id="GO:0030435">
    <property type="term" value="P:sporulation resulting in formation of a cellular spore"/>
    <property type="evidence" value="ECO:0007669"/>
    <property type="project" value="UniProtKB-KW"/>
</dbReference>
<dbReference type="HAMAP" id="MF_00665">
    <property type="entry name" value="SspO"/>
    <property type="match status" value="1"/>
</dbReference>
<dbReference type="InterPro" id="IPR012613">
    <property type="entry name" value="SASP_SspO"/>
</dbReference>
<dbReference type="NCBIfam" id="TIGR02864">
    <property type="entry name" value="spore_sspO"/>
    <property type="match status" value="1"/>
</dbReference>
<dbReference type="Pfam" id="PF08175">
    <property type="entry name" value="SspO"/>
    <property type="match status" value="1"/>
</dbReference>
<evidence type="ECO:0000255" key="1">
    <source>
        <dbReference type="HAMAP-Rule" id="MF_00665"/>
    </source>
</evidence>
<evidence type="ECO:0000256" key="2">
    <source>
        <dbReference type="SAM" id="MobiDB-lite"/>
    </source>
</evidence>
<accession>B7HC95</accession>
<name>SSPO_BACC4</name>
<keyword id="KW-0749">Sporulation</keyword>
<proteinExistence type="inferred from homology"/>